<name>MURC_ECOBW</name>
<reference key="1">
    <citation type="journal article" date="2009" name="J. Bacteriol.">
        <title>Genomic sequencing reveals regulatory mutations and recombinational events in the widely used MC4100 lineage of Escherichia coli K-12.</title>
        <authorList>
            <person name="Ferenci T."/>
            <person name="Zhou Z."/>
            <person name="Betteridge T."/>
            <person name="Ren Y."/>
            <person name="Liu Y."/>
            <person name="Feng L."/>
            <person name="Reeves P.R."/>
            <person name="Wang L."/>
        </authorList>
    </citation>
    <scope>NUCLEOTIDE SEQUENCE [LARGE SCALE GENOMIC DNA]</scope>
    <source>
        <strain>K12 / MC4100 / BW2952</strain>
    </source>
</reference>
<proteinExistence type="inferred from homology"/>
<comment type="function">
    <text evidence="1">Cell wall formation.</text>
</comment>
<comment type="catalytic activity">
    <reaction evidence="1">
        <text>UDP-N-acetyl-alpha-D-muramate + L-alanine + ATP = UDP-N-acetyl-alpha-D-muramoyl-L-alanine + ADP + phosphate + H(+)</text>
        <dbReference type="Rhea" id="RHEA:23372"/>
        <dbReference type="ChEBI" id="CHEBI:15378"/>
        <dbReference type="ChEBI" id="CHEBI:30616"/>
        <dbReference type="ChEBI" id="CHEBI:43474"/>
        <dbReference type="ChEBI" id="CHEBI:57972"/>
        <dbReference type="ChEBI" id="CHEBI:70757"/>
        <dbReference type="ChEBI" id="CHEBI:83898"/>
        <dbReference type="ChEBI" id="CHEBI:456216"/>
        <dbReference type="EC" id="6.3.2.8"/>
    </reaction>
</comment>
<comment type="pathway">
    <text evidence="1">Cell wall biogenesis; peptidoglycan biosynthesis.</text>
</comment>
<comment type="subcellular location">
    <subcellularLocation>
        <location evidence="1">Cytoplasm</location>
    </subcellularLocation>
</comment>
<comment type="similarity">
    <text evidence="1">Belongs to the MurCDEF family.</text>
</comment>
<dbReference type="EC" id="6.3.2.8" evidence="1"/>
<dbReference type="EMBL" id="CP001396">
    <property type="protein sequence ID" value="ACR65748.1"/>
    <property type="molecule type" value="Genomic_DNA"/>
</dbReference>
<dbReference type="RefSeq" id="WP_001096049.1">
    <property type="nucleotide sequence ID" value="NC_012759.1"/>
</dbReference>
<dbReference type="SMR" id="C4ZRI6"/>
<dbReference type="GeneID" id="75202092"/>
<dbReference type="KEGG" id="ebw:BWG_0086"/>
<dbReference type="HOGENOM" id="CLU_028104_2_2_6"/>
<dbReference type="UniPathway" id="UPA00219"/>
<dbReference type="GO" id="GO:0005737">
    <property type="term" value="C:cytoplasm"/>
    <property type="evidence" value="ECO:0007669"/>
    <property type="project" value="UniProtKB-SubCell"/>
</dbReference>
<dbReference type="GO" id="GO:0005524">
    <property type="term" value="F:ATP binding"/>
    <property type="evidence" value="ECO:0007669"/>
    <property type="project" value="UniProtKB-UniRule"/>
</dbReference>
<dbReference type="GO" id="GO:0008763">
    <property type="term" value="F:UDP-N-acetylmuramate-L-alanine ligase activity"/>
    <property type="evidence" value="ECO:0007669"/>
    <property type="project" value="UniProtKB-UniRule"/>
</dbReference>
<dbReference type="GO" id="GO:0051301">
    <property type="term" value="P:cell division"/>
    <property type="evidence" value="ECO:0007669"/>
    <property type="project" value="UniProtKB-KW"/>
</dbReference>
<dbReference type="GO" id="GO:0071555">
    <property type="term" value="P:cell wall organization"/>
    <property type="evidence" value="ECO:0007669"/>
    <property type="project" value="UniProtKB-KW"/>
</dbReference>
<dbReference type="GO" id="GO:0009252">
    <property type="term" value="P:peptidoglycan biosynthetic process"/>
    <property type="evidence" value="ECO:0007669"/>
    <property type="project" value="UniProtKB-UniRule"/>
</dbReference>
<dbReference type="GO" id="GO:0008360">
    <property type="term" value="P:regulation of cell shape"/>
    <property type="evidence" value="ECO:0007669"/>
    <property type="project" value="UniProtKB-KW"/>
</dbReference>
<dbReference type="FunFam" id="3.40.1190.10:FF:000001">
    <property type="entry name" value="UDP-N-acetylmuramate--L-alanine ligase"/>
    <property type="match status" value="1"/>
</dbReference>
<dbReference type="FunFam" id="3.40.50.720:FF:000046">
    <property type="entry name" value="UDP-N-acetylmuramate--L-alanine ligase"/>
    <property type="match status" value="1"/>
</dbReference>
<dbReference type="FunFam" id="3.90.190.20:FF:000001">
    <property type="entry name" value="UDP-N-acetylmuramate--L-alanine ligase"/>
    <property type="match status" value="1"/>
</dbReference>
<dbReference type="Gene3D" id="3.90.190.20">
    <property type="entry name" value="Mur ligase, C-terminal domain"/>
    <property type="match status" value="1"/>
</dbReference>
<dbReference type="Gene3D" id="3.40.1190.10">
    <property type="entry name" value="Mur-like, catalytic domain"/>
    <property type="match status" value="1"/>
</dbReference>
<dbReference type="Gene3D" id="3.40.50.720">
    <property type="entry name" value="NAD(P)-binding Rossmann-like Domain"/>
    <property type="match status" value="1"/>
</dbReference>
<dbReference type="HAMAP" id="MF_00046">
    <property type="entry name" value="MurC"/>
    <property type="match status" value="1"/>
</dbReference>
<dbReference type="InterPro" id="IPR036565">
    <property type="entry name" value="Mur-like_cat_sf"/>
</dbReference>
<dbReference type="InterPro" id="IPR004101">
    <property type="entry name" value="Mur_ligase_C"/>
</dbReference>
<dbReference type="InterPro" id="IPR036615">
    <property type="entry name" value="Mur_ligase_C_dom_sf"/>
</dbReference>
<dbReference type="InterPro" id="IPR013221">
    <property type="entry name" value="Mur_ligase_cen"/>
</dbReference>
<dbReference type="InterPro" id="IPR000713">
    <property type="entry name" value="Mur_ligase_N"/>
</dbReference>
<dbReference type="InterPro" id="IPR050061">
    <property type="entry name" value="MurCDEF_pg_biosynth"/>
</dbReference>
<dbReference type="InterPro" id="IPR005758">
    <property type="entry name" value="UDP-N-AcMur_Ala_ligase_MurC"/>
</dbReference>
<dbReference type="NCBIfam" id="TIGR01082">
    <property type="entry name" value="murC"/>
    <property type="match status" value="1"/>
</dbReference>
<dbReference type="PANTHER" id="PTHR43445:SF3">
    <property type="entry name" value="UDP-N-ACETYLMURAMATE--L-ALANINE LIGASE"/>
    <property type="match status" value="1"/>
</dbReference>
<dbReference type="PANTHER" id="PTHR43445">
    <property type="entry name" value="UDP-N-ACETYLMURAMATE--L-ALANINE LIGASE-RELATED"/>
    <property type="match status" value="1"/>
</dbReference>
<dbReference type="Pfam" id="PF01225">
    <property type="entry name" value="Mur_ligase"/>
    <property type="match status" value="1"/>
</dbReference>
<dbReference type="Pfam" id="PF02875">
    <property type="entry name" value="Mur_ligase_C"/>
    <property type="match status" value="1"/>
</dbReference>
<dbReference type="Pfam" id="PF08245">
    <property type="entry name" value="Mur_ligase_M"/>
    <property type="match status" value="1"/>
</dbReference>
<dbReference type="SUPFAM" id="SSF51984">
    <property type="entry name" value="MurCD N-terminal domain"/>
    <property type="match status" value="1"/>
</dbReference>
<dbReference type="SUPFAM" id="SSF53623">
    <property type="entry name" value="MurD-like peptide ligases, catalytic domain"/>
    <property type="match status" value="1"/>
</dbReference>
<dbReference type="SUPFAM" id="SSF53244">
    <property type="entry name" value="MurD-like peptide ligases, peptide-binding domain"/>
    <property type="match status" value="1"/>
</dbReference>
<sequence length="491" mass="53626">MNTQQLAKLRSIVPEMRRVRHIHFVGIGGAGMGGIAEVLANEGYQISGSDLAPNPVTQQLMNLGATIYFNHRPENVRDASVVVVSSAISADNPEIVAAHEARIPVIRRAEMLAELMRFRHGIAIAGTHGKTTTTAMVSSIYAEAGLDPTFVNGGLVKAAGVHARLGHGRYLIAEADESDASFLHLQPMVAIVTNIEADHMDTYQGDFENLKQTFINFLHNLPFYGRAVMCVDDPVIRELLPRVGRQTTTYGFSEDADVRVEDYQQIGPQGHFTLLRQDKEPMRVTLNAPGRHNALNAAAAVAVATEEGIDDEAILRALESFQGTGRRFDFLGEFPLEPVNGKSGTAMLVDDYGHHPTEVDATIKAARAGWPDKNLVMLFQPHRFTRTRDLYDDFANVLTQVDTLLMLEVYPAGEAPIPGADSRSLCRTIRGRGKIDPILVPDPARVAEMLAPVLTGNDLILVQGAGNIGKIARSLAEIKLKPQTPEEEQHD</sequence>
<feature type="chain" id="PRO_1000202177" description="UDP-N-acetylmuramate--L-alanine ligase">
    <location>
        <begin position="1"/>
        <end position="491"/>
    </location>
</feature>
<feature type="binding site" evidence="1">
    <location>
        <begin position="126"/>
        <end position="132"/>
    </location>
    <ligand>
        <name>ATP</name>
        <dbReference type="ChEBI" id="CHEBI:30616"/>
    </ligand>
</feature>
<organism>
    <name type="scientific">Escherichia coli (strain K12 / MC4100 / BW2952)</name>
    <dbReference type="NCBI Taxonomy" id="595496"/>
    <lineage>
        <taxon>Bacteria</taxon>
        <taxon>Pseudomonadati</taxon>
        <taxon>Pseudomonadota</taxon>
        <taxon>Gammaproteobacteria</taxon>
        <taxon>Enterobacterales</taxon>
        <taxon>Enterobacteriaceae</taxon>
        <taxon>Escherichia</taxon>
    </lineage>
</organism>
<keyword id="KW-0067">ATP-binding</keyword>
<keyword id="KW-0131">Cell cycle</keyword>
<keyword id="KW-0132">Cell division</keyword>
<keyword id="KW-0133">Cell shape</keyword>
<keyword id="KW-0961">Cell wall biogenesis/degradation</keyword>
<keyword id="KW-0963">Cytoplasm</keyword>
<keyword id="KW-0436">Ligase</keyword>
<keyword id="KW-0547">Nucleotide-binding</keyword>
<keyword id="KW-0573">Peptidoglycan synthesis</keyword>
<protein>
    <recommendedName>
        <fullName evidence="1">UDP-N-acetylmuramate--L-alanine ligase</fullName>
        <ecNumber evidence="1">6.3.2.8</ecNumber>
    </recommendedName>
    <alternativeName>
        <fullName evidence="1">UDP-N-acetylmuramoyl-L-alanine synthetase</fullName>
    </alternativeName>
</protein>
<gene>
    <name evidence="1" type="primary">murC</name>
    <name type="ordered locus">BWG_0086</name>
</gene>
<evidence type="ECO:0000255" key="1">
    <source>
        <dbReference type="HAMAP-Rule" id="MF_00046"/>
    </source>
</evidence>
<accession>C4ZRI6</accession>